<proteinExistence type="inferred from homology"/>
<feature type="chain" id="PRO_1000004257" description="Oligoribonuclease">
    <location>
        <begin position="1"/>
        <end position="181"/>
    </location>
</feature>
<feature type="domain" description="Exonuclease" evidence="1">
    <location>
        <begin position="8"/>
        <end position="171"/>
    </location>
</feature>
<feature type="active site" evidence="1">
    <location>
        <position position="129"/>
    </location>
</feature>
<keyword id="KW-0963">Cytoplasm</keyword>
<keyword id="KW-0269">Exonuclease</keyword>
<keyword id="KW-0378">Hydrolase</keyword>
<keyword id="KW-0540">Nuclease</keyword>
<dbReference type="EC" id="3.1.15.-" evidence="1"/>
<dbReference type="EMBL" id="CP000647">
    <property type="protein sequence ID" value="ABR79913.1"/>
    <property type="molecule type" value="Genomic_DNA"/>
</dbReference>
<dbReference type="RefSeq" id="WP_015959290.1">
    <property type="nucleotide sequence ID" value="NC_009648.1"/>
</dbReference>
<dbReference type="SMR" id="A6TH79"/>
<dbReference type="STRING" id="272620.KPN_04559"/>
<dbReference type="PaxDb" id="272620-KPN_04559"/>
<dbReference type="EnsemblBacteria" id="ABR79913">
    <property type="protein sequence ID" value="ABR79913"/>
    <property type="gene ID" value="KPN_04559"/>
</dbReference>
<dbReference type="KEGG" id="kpn:KPN_04559"/>
<dbReference type="HOGENOM" id="CLU_064761_2_0_6"/>
<dbReference type="Proteomes" id="UP000000265">
    <property type="component" value="Chromosome"/>
</dbReference>
<dbReference type="GO" id="GO:0005737">
    <property type="term" value="C:cytoplasm"/>
    <property type="evidence" value="ECO:0007669"/>
    <property type="project" value="UniProtKB-SubCell"/>
</dbReference>
<dbReference type="GO" id="GO:0000175">
    <property type="term" value="F:3'-5'-RNA exonuclease activity"/>
    <property type="evidence" value="ECO:0007669"/>
    <property type="project" value="InterPro"/>
</dbReference>
<dbReference type="GO" id="GO:0003676">
    <property type="term" value="F:nucleic acid binding"/>
    <property type="evidence" value="ECO:0007669"/>
    <property type="project" value="InterPro"/>
</dbReference>
<dbReference type="GO" id="GO:0006259">
    <property type="term" value="P:DNA metabolic process"/>
    <property type="evidence" value="ECO:0007669"/>
    <property type="project" value="UniProtKB-ARBA"/>
</dbReference>
<dbReference type="CDD" id="cd06135">
    <property type="entry name" value="Orn"/>
    <property type="match status" value="1"/>
</dbReference>
<dbReference type="FunFam" id="3.30.420.10:FF:000003">
    <property type="entry name" value="Oligoribonuclease"/>
    <property type="match status" value="1"/>
</dbReference>
<dbReference type="Gene3D" id="3.30.420.10">
    <property type="entry name" value="Ribonuclease H-like superfamily/Ribonuclease H"/>
    <property type="match status" value="1"/>
</dbReference>
<dbReference type="HAMAP" id="MF_00045">
    <property type="entry name" value="Oligoribonuclease"/>
    <property type="match status" value="1"/>
</dbReference>
<dbReference type="InterPro" id="IPR013520">
    <property type="entry name" value="Exonuclease_RNaseT/DNA_pol3"/>
</dbReference>
<dbReference type="InterPro" id="IPR022894">
    <property type="entry name" value="Oligoribonuclease"/>
</dbReference>
<dbReference type="InterPro" id="IPR012337">
    <property type="entry name" value="RNaseH-like_sf"/>
</dbReference>
<dbReference type="InterPro" id="IPR036397">
    <property type="entry name" value="RNaseH_sf"/>
</dbReference>
<dbReference type="NCBIfam" id="NF003765">
    <property type="entry name" value="PRK05359.1"/>
    <property type="match status" value="1"/>
</dbReference>
<dbReference type="PANTHER" id="PTHR11046">
    <property type="entry name" value="OLIGORIBONUCLEASE, MITOCHONDRIAL"/>
    <property type="match status" value="1"/>
</dbReference>
<dbReference type="PANTHER" id="PTHR11046:SF0">
    <property type="entry name" value="OLIGORIBONUCLEASE, MITOCHONDRIAL"/>
    <property type="match status" value="1"/>
</dbReference>
<dbReference type="Pfam" id="PF00929">
    <property type="entry name" value="RNase_T"/>
    <property type="match status" value="1"/>
</dbReference>
<dbReference type="SMART" id="SM00479">
    <property type="entry name" value="EXOIII"/>
    <property type="match status" value="1"/>
</dbReference>
<dbReference type="SUPFAM" id="SSF53098">
    <property type="entry name" value="Ribonuclease H-like"/>
    <property type="match status" value="1"/>
</dbReference>
<evidence type="ECO:0000255" key="1">
    <source>
        <dbReference type="HAMAP-Rule" id="MF_00045"/>
    </source>
</evidence>
<comment type="function">
    <text evidence="1">3'-to-5' exoribonuclease specific for small oligoribonucleotides.</text>
</comment>
<comment type="subcellular location">
    <subcellularLocation>
        <location evidence="1">Cytoplasm</location>
    </subcellularLocation>
</comment>
<comment type="similarity">
    <text evidence="1">Belongs to the oligoribonuclease family.</text>
</comment>
<protein>
    <recommendedName>
        <fullName evidence="1">Oligoribonuclease</fullName>
        <ecNumber evidence="1">3.1.15.-</ecNumber>
    </recommendedName>
</protein>
<reference key="1">
    <citation type="submission" date="2006-09" db="EMBL/GenBank/DDBJ databases">
        <authorList>
            <consortium name="The Klebsiella pneumonia Genome Sequencing Project"/>
            <person name="McClelland M."/>
            <person name="Sanderson E.K."/>
            <person name="Spieth J."/>
            <person name="Clifton W.S."/>
            <person name="Latreille P."/>
            <person name="Sabo A."/>
            <person name="Pepin K."/>
            <person name="Bhonagiri V."/>
            <person name="Porwollik S."/>
            <person name="Ali J."/>
            <person name="Wilson R.K."/>
        </authorList>
    </citation>
    <scope>NUCLEOTIDE SEQUENCE [LARGE SCALE GENOMIC DNA]</scope>
    <source>
        <strain>ATCC 700721 / MGH 78578</strain>
    </source>
</reference>
<organism>
    <name type="scientific">Klebsiella pneumoniae subsp. pneumoniae (strain ATCC 700721 / MGH 78578)</name>
    <dbReference type="NCBI Taxonomy" id="272620"/>
    <lineage>
        <taxon>Bacteria</taxon>
        <taxon>Pseudomonadati</taxon>
        <taxon>Pseudomonadota</taxon>
        <taxon>Gammaproteobacteria</taxon>
        <taxon>Enterobacterales</taxon>
        <taxon>Enterobacteriaceae</taxon>
        <taxon>Klebsiella/Raoultella group</taxon>
        <taxon>Klebsiella</taxon>
        <taxon>Klebsiella pneumoniae complex</taxon>
    </lineage>
</organism>
<name>ORN_KLEP7</name>
<accession>A6TH79</accession>
<sequence>MSANENNLIWIDLEMTGLDPERDRIIEIATLVTDANLNILAEGPTIAVHQSDAQLALMDEWNVRTHTGSGLVDRVKASTVSEHDAELATIDFLKQWVPAGKSPICGNSIGQDRRFLFKYMPQLEAYFHYRYLDVSTLKELARRWKPEILDGFKKQGTHQAMDDIRESVAELAYYREHFIKL</sequence>
<gene>
    <name evidence="1" type="primary">orn</name>
    <name type="ordered locus">KPN78578_44890</name>
    <name type="ORF">KPN_04559</name>
</gene>